<accession>C1F0N0</accession>
<organism>
    <name type="scientific">Bacillus cereus (strain 03BB102)</name>
    <dbReference type="NCBI Taxonomy" id="572264"/>
    <lineage>
        <taxon>Bacteria</taxon>
        <taxon>Bacillati</taxon>
        <taxon>Bacillota</taxon>
        <taxon>Bacilli</taxon>
        <taxon>Bacillales</taxon>
        <taxon>Bacillaceae</taxon>
        <taxon>Bacillus</taxon>
        <taxon>Bacillus cereus group</taxon>
    </lineage>
</organism>
<evidence type="ECO:0000255" key="1">
    <source>
        <dbReference type="HAMAP-Rule" id="MF_01346"/>
    </source>
</evidence>
<evidence type="ECO:0000256" key="2">
    <source>
        <dbReference type="SAM" id="MobiDB-lite"/>
    </source>
</evidence>
<sequence length="502" mass="54643">MSIRAEEISALIKQQIENYQSEIEVSDVGTVIQVGDGIARAHGLDNVMAGELVEFSNGVMGLAQNLEENNVGIIILGPYTEIREGDEVRRTGRIMQVPVGKELIGRVVNPLGQPVDGLGPINTTNTRPIESPAPGVMDRKSVHEPLQTGIKAIDALVPIGRGQRELIIGDRQTGKTAVALDTIINQKDEDMICIYVAIGQKESTVRNVVETLRKHGALEYTIVVTASASQPAPLLYLAPYAGVTMGEEFMYNGKHVLVVYDDLSKQAAAYRELSLLLRRPPGREAYPGDVFYLHSRLLERAAKLSDAKGGGSLTALPFIETQAGDVSAYIPTNVISITDGQIFLQSDLFFSGVRPAIDAGTSVSRVGGSAQIKAMSKVSGTLRLDLASYRELEAFAQFGSDLDKATQAKLNRGARTVEVLKQGLHKPLRVEKQVIILYALTRGFLDDIPVVDITRFEEEFHAWLDSNATDLLEEIRTTKKLADDDKFAAAINGFKKVFVASE</sequence>
<dbReference type="EC" id="7.1.2.2" evidence="1"/>
<dbReference type="EMBL" id="CP001407">
    <property type="protein sequence ID" value="ACO27737.1"/>
    <property type="molecule type" value="Genomic_DNA"/>
</dbReference>
<dbReference type="RefSeq" id="WP_000027518.1">
    <property type="nucleotide sequence ID" value="NZ_CP009318.1"/>
</dbReference>
<dbReference type="SMR" id="C1F0N0"/>
<dbReference type="GeneID" id="93005816"/>
<dbReference type="KEGG" id="bcx:BCA_5452"/>
<dbReference type="PATRIC" id="fig|572264.18.peg.5374"/>
<dbReference type="Proteomes" id="UP000002210">
    <property type="component" value="Chromosome"/>
</dbReference>
<dbReference type="GO" id="GO:0005886">
    <property type="term" value="C:plasma membrane"/>
    <property type="evidence" value="ECO:0007669"/>
    <property type="project" value="UniProtKB-SubCell"/>
</dbReference>
<dbReference type="GO" id="GO:0045259">
    <property type="term" value="C:proton-transporting ATP synthase complex"/>
    <property type="evidence" value="ECO:0007669"/>
    <property type="project" value="UniProtKB-KW"/>
</dbReference>
<dbReference type="GO" id="GO:0043531">
    <property type="term" value="F:ADP binding"/>
    <property type="evidence" value="ECO:0007669"/>
    <property type="project" value="TreeGrafter"/>
</dbReference>
<dbReference type="GO" id="GO:0005524">
    <property type="term" value="F:ATP binding"/>
    <property type="evidence" value="ECO:0007669"/>
    <property type="project" value="UniProtKB-UniRule"/>
</dbReference>
<dbReference type="GO" id="GO:0046933">
    <property type="term" value="F:proton-transporting ATP synthase activity, rotational mechanism"/>
    <property type="evidence" value="ECO:0007669"/>
    <property type="project" value="UniProtKB-UniRule"/>
</dbReference>
<dbReference type="CDD" id="cd18113">
    <property type="entry name" value="ATP-synt_F1_alpha_C"/>
    <property type="match status" value="1"/>
</dbReference>
<dbReference type="CDD" id="cd18116">
    <property type="entry name" value="ATP-synt_F1_alpha_N"/>
    <property type="match status" value="1"/>
</dbReference>
<dbReference type="CDD" id="cd01132">
    <property type="entry name" value="F1-ATPase_alpha_CD"/>
    <property type="match status" value="1"/>
</dbReference>
<dbReference type="FunFam" id="1.20.150.20:FF:000001">
    <property type="entry name" value="ATP synthase subunit alpha"/>
    <property type="match status" value="1"/>
</dbReference>
<dbReference type="FunFam" id="2.40.30.20:FF:000001">
    <property type="entry name" value="ATP synthase subunit alpha"/>
    <property type="match status" value="1"/>
</dbReference>
<dbReference type="FunFam" id="3.40.50.300:FF:000002">
    <property type="entry name" value="ATP synthase subunit alpha"/>
    <property type="match status" value="1"/>
</dbReference>
<dbReference type="Gene3D" id="2.40.30.20">
    <property type="match status" value="1"/>
</dbReference>
<dbReference type="Gene3D" id="1.20.150.20">
    <property type="entry name" value="ATP synthase alpha/beta chain, C-terminal domain"/>
    <property type="match status" value="1"/>
</dbReference>
<dbReference type="Gene3D" id="3.40.50.300">
    <property type="entry name" value="P-loop containing nucleotide triphosphate hydrolases"/>
    <property type="match status" value="1"/>
</dbReference>
<dbReference type="HAMAP" id="MF_01346">
    <property type="entry name" value="ATP_synth_alpha_bact"/>
    <property type="match status" value="1"/>
</dbReference>
<dbReference type="InterPro" id="IPR023366">
    <property type="entry name" value="ATP_synth_asu-like_sf"/>
</dbReference>
<dbReference type="InterPro" id="IPR000793">
    <property type="entry name" value="ATP_synth_asu_C"/>
</dbReference>
<dbReference type="InterPro" id="IPR038376">
    <property type="entry name" value="ATP_synth_asu_C_sf"/>
</dbReference>
<dbReference type="InterPro" id="IPR033732">
    <property type="entry name" value="ATP_synth_F1_a_nt-bd_dom"/>
</dbReference>
<dbReference type="InterPro" id="IPR005294">
    <property type="entry name" value="ATP_synth_F1_asu"/>
</dbReference>
<dbReference type="InterPro" id="IPR020003">
    <property type="entry name" value="ATPase_a/bsu_AS"/>
</dbReference>
<dbReference type="InterPro" id="IPR004100">
    <property type="entry name" value="ATPase_F1/V1/A1_a/bsu_N"/>
</dbReference>
<dbReference type="InterPro" id="IPR036121">
    <property type="entry name" value="ATPase_F1/V1/A1_a/bsu_N_sf"/>
</dbReference>
<dbReference type="InterPro" id="IPR000194">
    <property type="entry name" value="ATPase_F1/V1/A1_a/bsu_nucl-bd"/>
</dbReference>
<dbReference type="InterPro" id="IPR027417">
    <property type="entry name" value="P-loop_NTPase"/>
</dbReference>
<dbReference type="NCBIfam" id="TIGR00962">
    <property type="entry name" value="atpA"/>
    <property type="match status" value="1"/>
</dbReference>
<dbReference type="NCBIfam" id="NF009884">
    <property type="entry name" value="PRK13343.1"/>
    <property type="match status" value="1"/>
</dbReference>
<dbReference type="PANTHER" id="PTHR48082">
    <property type="entry name" value="ATP SYNTHASE SUBUNIT ALPHA, MITOCHONDRIAL"/>
    <property type="match status" value="1"/>
</dbReference>
<dbReference type="PANTHER" id="PTHR48082:SF2">
    <property type="entry name" value="ATP SYNTHASE SUBUNIT ALPHA, MITOCHONDRIAL"/>
    <property type="match status" value="1"/>
</dbReference>
<dbReference type="Pfam" id="PF00006">
    <property type="entry name" value="ATP-synt_ab"/>
    <property type="match status" value="1"/>
</dbReference>
<dbReference type="Pfam" id="PF00306">
    <property type="entry name" value="ATP-synt_ab_C"/>
    <property type="match status" value="1"/>
</dbReference>
<dbReference type="Pfam" id="PF02874">
    <property type="entry name" value="ATP-synt_ab_N"/>
    <property type="match status" value="1"/>
</dbReference>
<dbReference type="PIRSF" id="PIRSF039088">
    <property type="entry name" value="F_ATPase_subunit_alpha"/>
    <property type="match status" value="1"/>
</dbReference>
<dbReference type="SUPFAM" id="SSF47917">
    <property type="entry name" value="C-terminal domain of alpha and beta subunits of F1 ATP synthase"/>
    <property type="match status" value="1"/>
</dbReference>
<dbReference type="SUPFAM" id="SSF50615">
    <property type="entry name" value="N-terminal domain of alpha and beta subunits of F1 ATP synthase"/>
    <property type="match status" value="1"/>
</dbReference>
<dbReference type="SUPFAM" id="SSF52540">
    <property type="entry name" value="P-loop containing nucleoside triphosphate hydrolases"/>
    <property type="match status" value="1"/>
</dbReference>
<dbReference type="PROSITE" id="PS00152">
    <property type="entry name" value="ATPASE_ALPHA_BETA"/>
    <property type="match status" value="1"/>
</dbReference>
<comment type="function">
    <text evidence="1">Produces ATP from ADP in the presence of a proton gradient across the membrane. The alpha chain is a regulatory subunit.</text>
</comment>
<comment type="catalytic activity">
    <reaction evidence="1">
        <text>ATP + H2O + 4 H(+)(in) = ADP + phosphate + 5 H(+)(out)</text>
        <dbReference type="Rhea" id="RHEA:57720"/>
        <dbReference type="ChEBI" id="CHEBI:15377"/>
        <dbReference type="ChEBI" id="CHEBI:15378"/>
        <dbReference type="ChEBI" id="CHEBI:30616"/>
        <dbReference type="ChEBI" id="CHEBI:43474"/>
        <dbReference type="ChEBI" id="CHEBI:456216"/>
        <dbReference type="EC" id="7.1.2.2"/>
    </reaction>
</comment>
<comment type="subunit">
    <text evidence="1">F-type ATPases have 2 components, CF(1) - the catalytic core - and CF(0) - the membrane proton channel. CF(1) has five subunits: alpha(3), beta(3), gamma(1), delta(1), epsilon(1). CF(0) has three main subunits: a(1), b(2) and c(9-12). The alpha and beta chains form an alternating ring which encloses part of the gamma chain. CF(1) is attached to CF(0) by a central stalk formed by the gamma and epsilon chains, while a peripheral stalk is formed by the delta and b chains.</text>
</comment>
<comment type="subcellular location">
    <subcellularLocation>
        <location evidence="1">Cell membrane</location>
        <topology evidence="1">Peripheral membrane protein</topology>
    </subcellularLocation>
</comment>
<comment type="similarity">
    <text evidence="1">Belongs to the ATPase alpha/beta chains family.</text>
</comment>
<protein>
    <recommendedName>
        <fullName evidence="1">ATP synthase subunit alpha</fullName>
        <ecNumber evidence="1">7.1.2.2</ecNumber>
    </recommendedName>
    <alternativeName>
        <fullName evidence="1">ATP synthase F1 sector subunit alpha</fullName>
    </alternativeName>
    <alternativeName>
        <fullName evidence="1">F-ATPase subunit alpha</fullName>
    </alternativeName>
</protein>
<feature type="chain" id="PRO_1000166518" description="ATP synthase subunit alpha">
    <location>
        <begin position="1"/>
        <end position="502"/>
    </location>
</feature>
<feature type="region of interest" description="Disordered" evidence="2">
    <location>
        <begin position="115"/>
        <end position="135"/>
    </location>
</feature>
<feature type="binding site" evidence="1">
    <location>
        <begin position="169"/>
        <end position="176"/>
    </location>
    <ligand>
        <name>ATP</name>
        <dbReference type="ChEBI" id="CHEBI:30616"/>
    </ligand>
</feature>
<feature type="site" description="Required for activity" evidence="1">
    <location>
        <position position="362"/>
    </location>
</feature>
<gene>
    <name evidence="1" type="primary">atpA</name>
    <name type="ordered locus">BCA_5452</name>
</gene>
<name>ATPA_BACC3</name>
<reference key="1">
    <citation type="submission" date="2009-02" db="EMBL/GenBank/DDBJ databases">
        <title>Genome sequence of Bacillus cereus 03BB102.</title>
        <authorList>
            <person name="Dodson R.J."/>
            <person name="Jackson P."/>
            <person name="Munk A.C."/>
            <person name="Brettin T."/>
            <person name="Bruce D."/>
            <person name="Detter C."/>
            <person name="Tapia R."/>
            <person name="Han C."/>
            <person name="Sutton G."/>
            <person name="Sims D."/>
        </authorList>
    </citation>
    <scope>NUCLEOTIDE SEQUENCE [LARGE SCALE GENOMIC DNA]</scope>
    <source>
        <strain>03BB102</strain>
    </source>
</reference>
<proteinExistence type="inferred from homology"/>
<keyword id="KW-0066">ATP synthesis</keyword>
<keyword id="KW-0067">ATP-binding</keyword>
<keyword id="KW-1003">Cell membrane</keyword>
<keyword id="KW-0139">CF(1)</keyword>
<keyword id="KW-0375">Hydrogen ion transport</keyword>
<keyword id="KW-0406">Ion transport</keyword>
<keyword id="KW-0472">Membrane</keyword>
<keyword id="KW-0547">Nucleotide-binding</keyword>
<keyword id="KW-1278">Translocase</keyword>
<keyword id="KW-0813">Transport</keyword>